<name>EMBA_MYCSM</name>
<reference key="1">
    <citation type="journal article" date="1997" name="Nat. Med.">
        <title>The emb operon, a gene cluster of Mycobacterium tuberculosis involved in resistance to ethambutol.</title>
        <authorList>
            <person name="Telenti A."/>
            <person name="Philipp W.J."/>
            <person name="Sreevatsan S."/>
            <person name="Bernasconi C."/>
            <person name="Stockbauer K.E."/>
            <person name="Wieles B."/>
            <person name="Musser J.M."/>
            <person name="Jacobs W.R. Jr."/>
        </authorList>
    </citation>
    <scope>NUCLEOTIDE SEQUENCE [GENOMIC DNA]</scope>
    <source>
        <strain>imm30</strain>
    </source>
</reference>
<proteinExistence type="inferred from homology"/>
<gene>
    <name type="primary">embA</name>
</gene>
<comment type="function">
    <text>Arabinosyl transferase responsible for the polymerization of arabinose into the arabinan of arabinogalactan.</text>
</comment>
<comment type="subcellular location">
    <subcellularLocation>
        <location evidence="3">Cell membrane</location>
        <topology evidence="3">Multi-pass membrane protein</topology>
    </subcellularLocation>
</comment>
<comment type="miscellaneous">
    <text>This is one of the targets of the anti-tuberculosis drug ethambutol [(S,S')-2,2'-(ethylenediimino)di-1-butanol; EMB]. EMB is a first-line drug used to treat tuberculosis. EMB inhibits the transfer of arabinogalactan into the cell wall.</text>
</comment>
<comment type="similarity">
    <text evidence="3">Belongs to the emb family.</text>
</comment>
<feature type="chain" id="PRO_0000220563" description="Probable arabinosyltransferase A">
    <location>
        <begin position="1"/>
        <end position="1092"/>
    </location>
</feature>
<feature type="transmembrane region" description="Helical" evidence="1">
    <location>
        <begin position="21"/>
        <end position="43"/>
    </location>
</feature>
<feature type="transmembrane region" description="Helical" evidence="1">
    <location>
        <begin position="214"/>
        <end position="233"/>
    </location>
</feature>
<feature type="transmembrane region" description="Helical" evidence="1">
    <location>
        <begin position="249"/>
        <end position="271"/>
    </location>
</feature>
<feature type="transmembrane region" description="Helical" evidence="1">
    <location>
        <begin position="324"/>
        <end position="346"/>
    </location>
</feature>
<feature type="transmembrane region" description="Helical" evidence="1">
    <location>
        <begin position="353"/>
        <end position="372"/>
    </location>
</feature>
<feature type="transmembrane region" description="Helical" evidence="1">
    <location>
        <begin position="382"/>
        <end position="399"/>
    </location>
</feature>
<feature type="transmembrane region" description="Helical" evidence="1">
    <location>
        <begin position="404"/>
        <end position="426"/>
    </location>
</feature>
<feature type="transmembrane region" description="Helical" evidence="1">
    <location>
        <begin position="517"/>
        <end position="534"/>
    </location>
</feature>
<feature type="transmembrane region" description="Helical" evidence="1">
    <location>
        <begin position="541"/>
        <end position="563"/>
    </location>
</feature>
<feature type="transmembrane region" description="Helical" evidence="1">
    <location>
        <begin position="568"/>
        <end position="590"/>
    </location>
</feature>
<feature type="transmembrane region" description="Helical" evidence="1">
    <location>
        <begin position="602"/>
        <end position="624"/>
    </location>
</feature>
<feature type="transmembrane region" description="Helical" evidence="1">
    <location>
        <begin position="639"/>
        <end position="661"/>
    </location>
</feature>
<feature type="transmembrane region" description="Helical" evidence="1">
    <location>
        <begin position="682"/>
        <end position="704"/>
    </location>
</feature>
<feature type="region of interest" description="Disordered" evidence="2">
    <location>
        <begin position="772"/>
        <end position="798"/>
    </location>
</feature>
<accession>Q50394</accession>
<keyword id="KW-0046">Antibiotic resistance</keyword>
<keyword id="KW-1003">Cell membrane</keyword>
<keyword id="KW-0961">Cell wall biogenesis/degradation</keyword>
<keyword id="KW-0328">Glycosyltransferase</keyword>
<keyword id="KW-0472">Membrane</keyword>
<keyword id="KW-0808">Transferase</keyword>
<keyword id="KW-0812">Transmembrane</keyword>
<keyword id="KW-1133">Transmembrane helix</keyword>
<evidence type="ECO:0000255" key="1"/>
<evidence type="ECO:0000256" key="2">
    <source>
        <dbReference type="SAM" id="MobiDB-lite"/>
    </source>
</evidence>
<evidence type="ECO:0000305" key="3"/>
<sequence>MPGDEQRERTADDAVTEPSRIARLIAVVAGIAGVLLCGLVPLLPVEETTATVLWPQGVGADGNVTELTAPLVAGAPRALDVTIPCRAVAELPADGGVVFSTNPAGGIEAGRNGMFIRANADVVYVAFRDTVAAVAPREAVDSGACSEIHVWADVSAVGADFAGIPDASGTLPVDKRPQVSGVFTDLKVPAQPGLAARIDIDTRFITSPTLLKTAVMVLGLACVIGSIVALALLDRGWRRRPARTRGRAGLWTWITDTGVIGGLLIWHIVGAPTSDDGYNMTIARVASEAGYTTNYYRYFGASEAPFDWYQSVLSHLASISTAGVWMRLPATAAAIATWLIISRCVLPRIGRRVAANRVAMLTAGATFLAAWLPFNNGLRPEPLIAFAVITVWMLVENSIGTRRLWPAAVAIVIAMFSVTLAPQGLIALAPLLVGARAIGRVVTARRAAPGSWRPCPLAASVAVVFVIIFRDQTLATVAESVRIKYVVGPTIPWYQEFLRYYFLTVEDSVDGSLTRRFAVLVLLLCLFGLIMVLLRRGRVPGAVSGPLWRLCGSTAIGLLLLILTPTKWAIQFGAFAGLAGALGGVTAFAFARVGLHSRRNLALYVTALLFILAWATSGLNGWFYVGNYGVPWFDKQPVIAHYPVTTIFLVLAIVGGLLAGWLHFRMDYAGHTEVADTGRNRALASTPLLIVATIMVVLELGSMVKATVGRYPVYTVGSANIAALRSAGDSCAMADAVLVEADPNEGMLQPVPGQRFGDYGPLGGEDPVGFTPSGVSEHLEPEPVGTNPGTPNSEGPVDKPNIGIAYAGDTGGGYAPEGVNGSRVFLPFGLDPSRTPVMGSYGENKLAAKATSAWYQLPPRTPDRPLVTVAAAGAIWYYEEDGSFNYGQSLKLQWGVHRPDGTYQALSEVQPIDIFQQKAWRNLRFPLAWAPPEANVARIVADDPNLSEDQWCAFTPPRVPVLQTAQQFLGSQTPVLMDIATAANFPCQRPFAERLGVAELPEYRIIPNFKQMVVSSNQWQSAADGGPFLFIQALLRTEAIPTYLRDDWYRDWGSIERYIRVVPQEQAPTAAIEEGSTRVFGWSRGGPIRALP</sequence>
<organism>
    <name type="scientific">Mycolicibacterium smegmatis</name>
    <name type="common">Mycobacterium smegmatis</name>
    <dbReference type="NCBI Taxonomy" id="1772"/>
    <lineage>
        <taxon>Bacteria</taxon>
        <taxon>Bacillati</taxon>
        <taxon>Actinomycetota</taxon>
        <taxon>Actinomycetes</taxon>
        <taxon>Mycobacteriales</taxon>
        <taxon>Mycobacteriaceae</taxon>
        <taxon>Mycolicibacterium</taxon>
    </lineage>
</organism>
<dbReference type="EC" id="2.4.2.-"/>
<dbReference type="EMBL" id="U46844">
    <property type="protein sequence ID" value="AAC45272.1"/>
    <property type="molecule type" value="Genomic_DNA"/>
</dbReference>
<dbReference type="PIR" id="T45095">
    <property type="entry name" value="T45095"/>
</dbReference>
<dbReference type="SMR" id="Q50394"/>
<dbReference type="CAZy" id="GT53">
    <property type="family name" value="Glycosyltransferase Family 53"/>
</dbReference>
<dbReference type="GO" id="GO:0005886">
    <property type="term" value="C:plasma membrane"/>
    <property type="evidence" value="ECO:0007669"/>
    <property type="project" value="UniProtKB-SubCell"/>
</dbReference>
<dbReference type="GO" id="GO:0052636">
    <property type="term" value="F:arabinosyltransferase activity"/>
    <property type="evidence" value="ECO:0007669"/>
    <property type="project" value="InterPro"/>
</dbReference>
<dbReference type="GO" id="GO:0071766">
    <property type="term" value="P:Actinobacterium-type cell wall biogenesis"/>
    <property type="evidence" value="ECO:0007669"/>
    <property type="project" value="InterPro"/>
</dbReference>
<dbReference type="GO" id="GO:0071555">
    <property type="term" value="P:cell wall organization"/>
    <property type="evidence" value="ECO:0007669"/>
    <property type="project" value="UniProtKB-KW"/>
</dbReference>
<dbReference type="GO" id="GO:0046677">
    <property type="term" value="P:response to antibiotic"/>
    <property type="evidence" value="ECO:0007669"/>
    <property type="project" value="UniProtKB-KW"/>
</dbReference>
<dbReference type="FunFam" id="2.60.120.940:FF:000001">
    <property type="entry name" value="Membrane indolylacetylinositol arabinosyltransferase embC"/>
    <property type="match status" value="1"/>
</dbReference>
<dbReference type="Gene3D" id="2.60.120.610">
    <property type="entry name" value="arabinofuranosyltransferase like domain"/>
    <property type="match status" value="1"/>
</dbReference>
<dbReference type="Gene3D" id="2.60.120.940">
    <property type="entry name" value="EmbC, C-terminal domain, subdomain 2"/>
    <property type="match status" value="1"/>
</dbReference>
<dbReference type="InterPro" id="IPR032731">
    <property type="entry name" value="Arabino_trans_C"/>
</dbReference>
<dbReference type="InterPro" id="IPR042486">
    <property type="entry name" value="Arabino_trans_C_2"/>
</dbReference>
<dbReference type="InterPro" id="IPR007680">
    <property type="entry name" value="Arabino_trans_central"/>
</dbReference>
<dbReference type="InterPro" id="IPR040920">
    <property type="entry name" value="Arabino_trans_N"/>
</dbReference>
<dbReference type="InterPro" id="IPR027451">
    <property type="entry name" value="EmbABC_dom1"/>
</dbReference>
<dbReference type="Pfam" id="PF14896">
    <property type="entry name" value="Arabino_trans_C"/>
    <property type="match status" value="1"/>
</dbReference>
<dbReference type="Pfam" id="PF17689">
    <property type="entry name" value="Arabino_trans_N"/>
    <property type="match status" value="1"/>
</dbReference>
<dbReference type="Pfam" id="PF04602">
    <property type="entry name" value="Arabinose_trans"/>
    <property type="match status" value="1"/>
</dbReference>
<protein>
    <recommendedName>
        <fullName>Probable arabinosyltransferase A</fullName>
        <ecNumber>2.4.2.-</ecNumber>
    </recommendedName>
</protein>